<protein>
    <recommendedName>
        <fullName evidence="1">UPF0273 protein MJ1359</fullName>
    </recommendedName>
</protein>
<dbReference type="EMBL" id="L77117">
    <property type="protein sequence ID" value="AAB99368.1"/>
    <property type="molecule type" value="Genomic_DNA"/>
</dbReference>
<dbReference type="PIR" id="F64469">
    <property type="entry name" value="F64469"/>
</dbReference>
<dbReference type="RefSeq" id="WP_010870876.1">
    <property type="nucleotide sequence ID" value="NC_000909.1"/>
</dbReference>
<dbReference type="SMR" id="Q58754"/>
<dbReference type="STRING" id="243232.MJ_1359"/>
<dbReference type="PaxDb" id="243232-MJ_1359"/>
<dbReference type="EnsemblBacteria" id="AAB99368">
    <property type="protein sequence ID" value="AAB99368"/>
    <property type="gene ID" value="MJ_1359"/>
</dbReference>
<dbReference type="GeneID" id="1452261"/>
<dbReference type="KEGG" id="mja:MJ_1359"/>
<dbReference type="eggNOG" id="arCOG01171">
    <property type="taxonomic scope" value="Archaea"/>
</dbReference>
<dbReference type="HOGENOM" id="CLU_023669_2_0_2"/>
<dbReference type="InParanoid" id="Q58754"/>
<dbReference type="OrthoDB" id="27015at2157"/>
<dbReference type="PhylomeDB" id="Q58754"/>
<dbReference type="Proteomes" id="UP000000805">
    <property type="component" value="Chromosome"/>
</dbReference>
<dbReference type="GO" id="GO:0005524">
    <property type="term" value="F:ATP binding"/>
    <property type="evidence" value="ECO:0007669"/>
    <property type="project" value="UniProtKB-UniRule"/>
</dbReference>
<dbReference type="CDD" id="cd19486">
    <property type="entry name" value="KaiC_arch"/>
    <property type="match status" value="1"/>
</dbReference>
<dbReference type="Gene3D" id="3.40.50.300">
    <property type="entry name" value="P-loop containing nucleotide triphosphate hydrolases"/>
    <property type="match status" value="1"/>
</dbReference>
<dbReference type="HAMAP" id="MF_01076">
    <property type="entry name" value="UPF0273"/>
    <property type="match status" value="1"/>
</dbReference>
<dbReference type="InterPro" id="IPR014774">
    <property type="entry name" value="KaiC-like_dom"/>
</dbReference>
<dbReference type="InterPro" id="IPR010624">
    <property type="entry name" value="KaiC_dom"/>
</dbReference>
<dbReference type="InterPro" id="IPR027417">
    <property type="entry name" value="P-loop_NTPase"/>
</dbReference>
<dbReference type="InterPro" id="IPR022475">
    <property type="entry name" value="UPF0273_KaiC-like"/>
</dbReference>
<dbReference type="NCBIfam" id="TIGR03877">
    <property type="entry name" value="thermo_KaiC_1"/>
    <property type="match status" value="1"/>
</dbReference>
<dbReference type="PANTHER" id="PTHR43637">
    <property type="entry name" value="UPF0273 PROTEIN TM_0370"/>
    <property type="match status" value="1"/>
</dbReference>
<dbReference type="PANTHER" id="PTHR43637:SF1">
    <property type="entry name" value="UPF0273 PROTEIN TM_0370"/>
    <property type="match status" value="1"/>
</dbReference>
<dbReference type="Pfam" id="PF06745">
    <property type="entry name" value="ATPase"/>
    <property type="match status" value="1"/>
</dbReference>
<dbReference type="PRINTS" id="PR01874">
    <property type="entry name" value="DNAREPAIRADA"/>
</dbReference>
<dbReference type="SUPFAM" id="SSF52540">
    <property type="entry name" value="P-loop containing nucleoside triphosphate hydrolases"/>
    <property type="match status" value="1"/>
</dbReference>
<dbReference type="PROSITE" id="PS51146">
    <property type="entry name" value="KAIC"/>
    <property type="match status" value="1"/>
</dbReference>
<comment type="similarity">
    <text evidence="1">Belongs to the UPF0273 family.</text>
</comment>
<proteinExistence type="inferred from homology"/>
<name>Y1359_METJA</name>
<keyword id="KW-0067">ATP-binding</keyword>
<keyword id="KW-0547">Nucleotide-binding</keyword>
<keyword id="KW-1185">Reference proteome</keyword>
<organism>
    <name type="scientific">Methanocaldococcus jannaschii (strain ATCC 43067 / DSM 2661 / JAL-1 / JCM 10045 / NBRC 100440)</name>
    <name type="common">Methanococcus jannaschii</name>
    <dbReference type="NCBI Taxonomy" id="243232"/>
    <lineage>
        <taxon>Archaea</taxon>
        <taxon>Methanobacteriati</taxon>
        <taxon>Methanobacteriota</taxon>
        <taxon>Methanomada group</taxon>
        <taxon>Methanococci</taxon>
        <taxon>Methanococcales</taxon>
        <taxon>Methanocaldococcaceae</taxon>
        <taxon>Methanocaldococcus</taxon>
    </lineage>
</organism>
<sequence length="242" mass="26988">MKRVKTGIPGMDEILHGGIPERNVVLLSGGPGTGKSIFCQQFLYKGVVDYNEPSILVALEEHPVQIRENMRQFGWDIRKLEEEGKFAIIDAFTYGIGSAAKREKYVVNDPNDERELIDVLKTAINDIGAKRIGIDSVTTLYINKPMLARRTVFLLKRVISGLGCTAIFTSQISVGERGFGGPGVEHAVDGIIRLDLDEIDGELKRSLIVWKMRGTSHSLKRHPFDITNEGIIVYPDKVLKLR</sequence>
<feature type="chain" id="PRO_0000184585" description="UPF0273 protein MJ1359">
    <location>
        <begin position="1"/>
        <end position="242"/>
    </location>
</feature>
<feature type="domain" description="KaiC" evidence="1">
    <location>
        <begin position="2"/>
        <end position="242"/>
    </location>
</feature>
<feature type="binding site" evidence="1">
    <location>
        <begin position="29"/>
        <end position="36"/>
    </location>
    <ligand>
        <name>ATP</name>
        <dbReference type="ChEBI" id="CHEBI:30616"/>
    </ligand>
</feature>
<accession>Q58754</accession>
<gene>
    <name type="ordered locus">MJ1359</name>
</gene>
<evidence type="ECO:0000255" key="1">
    <source>
        <dbReference type="HAMAP-Rule" id="MF_01076"/>
    </source>
</evidence>
<reference key="1">
    <citation type="journal article" date="1996" name="Science">
        <title>Complete genome sequence of the methanogenic archaeon, Methanococcus jannaschii.</title>
        <authorList>
            <person name="Bult C.J."/>
            <person name="White O."/>
            <person name="Olsen G.J."/>
            <person name="Zhou L."/>
            <person name="Fleischmann R.D."/>
            <person name="Sutton G.G."/>
            <person name="Blake J.A."/>
            <person name="FitzGerald L.M."/>
            <person name="Clayton R.A."/>
            <person name="Gocayne J.D."/>
            <person name="Kerlavage A.R."/>
            <person name="Dougherty B.A."/>
            <person name="Tomb J.-F."/>
            <person name="Adams M.D."/>
            <person name="Reich C.I."/>
            <person name="Overbeek R."/>
            <person name="Kirkness E.F."/>
            <person name="Weinstock K.G."/>
            <person name="Merrick J.M."/>
            <person name="Glodek A."/>
            <person name="Scott J.L."/>
            <person name="Geoghagen N.S.M."/>
            <person name="Weidman J.F."/>
            <person name="Fuhrmann J.L."/>
            <person name="Nguyen D."/>
            <person name="Utterback T.R."/>
            <person name="Kelley J.M."/>
            <person name="Peterson J.D."/>
            <person name="Sadow P.W."/>
            <person name="Hanna M.C."/>
            <person name="Cotton M.D."/>
            <person name="Roberts K.M."/>
            <person name="Hurst M.A."/>
            <person name="Kaine B.P."/>
            <person name="Borodovsky M."/>
            <person name="Klenk H.-P."/>
            <person name="Fraser C.M."/>
            <person name="Smith H.O."/>
            <person name="Woese C.R."/>
            <person name="Venter J.C."/>
        </authorList>
    </citation>
    <scope>NUCLEOTIDE SEQUENCE [LARGE SCALE GENOMIC DNA]</scope>
    <source>
        <strain>ATCC 43067 / DSM 2661 / JAL-1 / JCM 10045 / NBRC 100440</strain>
    </source>
</reference>